<organism>
    <name type="scientific">Caenorhabditis elegans</name>
    <dbReference type="NCBI Taxonomy" id="6239"/>
    <lineage>
        <taxon>Eukaryota</taxon>
        <taxon>Metazoa</taxon>
        <taxon>Ecdysozoa</taxon>
        <taxon>Nematoda</taxon>
        <taxon>Chromadorea</taxon>
        <taxon>Rhabditida</taxon>
        <taxon>Rhabditina</taxon>
        <taxon>Rhabditomorpha</taxon>
        <taxon>Rhabditoidea</taxon>
        <taxon>Rhabditidae</taxon>
        <taxon>Peloderinae</taxon>
        <taxon>Caenorhabditis</taxon>
    </lineage>
</organism>
<evidence type="ECO:0000250" key="1"/>
<evidence type="ECO:0000305" key="2"/>
<feature type="chain" id="PRO_0000052268" description="Putative cytochrome P450 CYP13A8">
    <location>
        <begin position="1"/>
        <end position="509"/>
    </location>
</feature>
<feature type="binding site" description="axial binding residue" evidence="1">
    <location>
        <position position="455"/>
    </location>
    <ligand>
        <name>heme</name>
        <dbReference type="ChEBI" id="CHEBI:30413"/>
    </ligand>
    <ligandPart>
        <name>Fe</name>
        <dbReference type="ChEBI" id="CHEBI:18248"/>
    </ligandPart>
</feature>
<proteinExistence type="inferred from homology"/>
<reference key="1">
    <citation type="journal article" date="1998" name="Science">
        <title>Genome sequence of the nematode C. elegans: a platform for investigating biology.</title>
        <authorList>
            <consortium name="The C. elegans sequencing consortium"/>
        </authorList>
    </citation>
    <scope>NUCLEOTIDE SEQUENCE [LARGE SCALE GENOMIC DNA]</scope>
    <source>
        <strain>Bristol N2</strain>
    </source>
</reference>
<accession>Q27516</accession>
<accession>O01997</accession>
<gene>
    <name type="primary">cyp-13A8</name>
    <name type="synonym">cyp13a8</name>
    <name type="ORF">T10B9.4</name>
</gene>
<protein>
    <recommendedName>
        <fullName>Putative cytochrome P450 CYP13A8</fullName>
        <ecNumber>1.14.-.-</ecNumber>
    </recommendedName>
</protein>
<dbReference type="EC" id="1.14.-.-"/>
<dbReference type="EMBL" id="Z48717">
    <property type="protein sequence ID" value="CAA88611.1"/>
    <property type="molecule type" value="Genomic_DNA"/>
</dbReference>
<dbReference type="EMBL" id="Z95623">
    <property type="protein sequence ID" value="CAA88611.1"/>
    <property type="status" value="JOINED"/>
    <property type="molecule type" value="Genomic_DNA"/>
</dbReference>
<dbReference type="PIR" id="T24785">
    <property type="entry name" value="T24785"/>
</dbReference>
<dbReference type="RefSeq" id="NP_496115.1">
    <property type="nucleotide sequence ID" value="NM_063714.2"/>
</dbReference>
<dbReference type="SMR" id="Q27516"/>
<dbReference type="BioGRID" id="53025">
    <property type="interactions" value="3"/>
</dbReference>
<dbReference type="FunCoup" id="Q27516">
    <property type="interactions" value="106"/>
</dbReference>
<dbReference type="STRING" id="6239.T10B9.4.1"/>
<dbReference type="PaxDb" id="6239-T10B9.4"/>
<dbReference type="PeptideAtlas" id="Q27516"/>
<dbReference type="EnsemblMetazoa" id="T10B9.4.1">
    <property type="protein sequence ID" value="T10B9.4.1"/>
    <property type="gene ID" value="WBGene00011674"/>
</dbReference>
<dbReference type="GeneID" id="188358"/>
<dbReference type="KEGG" id="cel:CELE_T10B9.4"/>
<dbReference type="UCSC" id="T10B9.4">
    <property type="organism name" value="c. elegans"/>
</dbReference>
<dbReference type="AGR" id="WB:WBGene00011674"/>
<dbReference type="CTD" id="188358"/>
<dbReference type="WormBase" id="T10B9.4">
    <property type="protein sequence ID" value="CE13541"/>
    <property type="gene ID" value="WBGene00011674"/>
    <property type="gene designation" value="cyp-13A8"/>
</dbReference>
<dbReference type="eggNOG" id="KOG0158">
    <property type="taxonomic scope" value="Eukaryota"/>
</dbReference>
<dbReference type="HOGENOM" id="CLU_001570_5_2_1"/>
<dbReference type="InParanoid" id="Q27516"/>
<dbReference type="OMA" id="LYDCKGF"/>
<dbReference type="OrthoDB" id="2789670at2759"/>
<dbReference type="PhylomeDB" id="Q27516"/>
<dbReference type="PRO" id="PR:Q27516"/>
<dbReference type="Proteomes" id="UP000001940">
    <property type="component" value="Chromosome II"/>
</dbReference>
<dbReference type="GO" id="GO:0020037">
    <property type="term" value="F:heme binding"/>
    <property type="evidence" value="ECO:0007669"/>
    <property type="project" value="InterPro"/>
</dbReference>
<dbReference type="GO" id="GO:0005506">
    <property type="term" value="F:iron ion binding"/>
    <property type="evidence" value="ECO:0007669"/>
    <property type="project" value="InterPro"/>
</dbReference>
<dbReference type="GO" id="GO:0004497">
    <property type="term" value="F:monooxygenase activity"/>
    <property type="evidence" value="ECO:0007669"/>
    <property type="project" value="UniProtKB-KW"/>
</dbReference>
<dbReference type="GO" id="GO:0016705">
    <property type="term" value="F:oxidoreductase activity, acting on paired donors, with incorporation or reduction of molecular oxygen"/>
    <property type="evidence" value="ECO:0007669"/>
    <property type="project" value="InterPro"/>
</dbReference>
<dbReference type="CDD" id="cd11055">
    <property type="entry name" value="CYP3A-like"/>
    <property type="match status" value="1"/>
</dbReference>
<dbReference type="FunFam" id="1.10.630.10:FF:000182">
    <property type="entry name" value="Cytochrome P450 3A4"/>
    <property type="match status" value="1"/>
</dbReference>
<dbReference type="Gene3D" id="1.10.630.10">
    <property type="entry name" value="Cytochrome P450"/>
    <property type="match status" value="1"/>
</dbReference>
<dbReference type="InterPro" id="IPR001128">
    <property type="entry name" value="Cyt_P450"/>
</dbReference>
<dbReference type="InterPro" id="IPR017972">
    <property type="entry name" value="Cyt_P450_CS"/>
</dbReference>
<dbReference type="InterPro" id="IPR002401">
    <property type="entry name" value="Cyt_P450_E_grp-I"/>
</dbReference>
<dbReference type="InterPro" id="IPR036396">
    <property type="entry name" value="Cyt_P450_sf"/>
</dbReference>
<dbReference type="InterPro" id="IPR050476">
    <property type="entry name" value="Insect_CytP450_Detox"/>
</dbReference>
<dbReference type="PANTHER" id="PTHR24292">
    <property type="entry name" value="CYTOCHROME P450"/>
    <property type="match status" value="1"/>
</dbReference>
<dbReference type="PANTHER" id="PTHR24292:SF102">
    <property type="entry name" value="CYTOCHROME P450 FAMILY-RELATED"/>
    <property type="match status" value="1"/>
</dbReference>
<dbReference type="Pfam" id="PF00067">
    <property type="entry name" value="p450"/>
    <property type="match status" value="1"/>
</dbReference>
<dbReference type="PRINTS" id="PR00463">
    <property type="entry name" value="EP450I"/>
</dbReference>
<dbReference type="PRINTS" id="PR00385">
    <property type="entry name" value="P450"/>
</dbReference>
<dbReference type="SUPFAM" id="SSF48264">
    <property type="entry name" value="Cytochrome P450"/>
    <property type="match status" value="1"/>
</dbReference>
<dbReference type="PROSITE" id="PS00086">
    <property type="entry name" value="CYTOCHROME_P450"/>
    <property type="match status" value="1"/>
</dbReference>
<comment type="function">
    <text>Cytochromes P450 are a group of heme-thiolate monooxygenases. They oxidize a variety of structurally unrelated compounds, including steroids, fatty acids, and xenobiotics.</text>
</comment>
<comment type="cofactor">
    <cofactor evidence="1">
        <name>heme</name>
        <dbReference type="ChEBI" id="CHEBI:30413"/>
    </cofactor>
</comment>
<comment type="similarity">
    <text evidence="2">Belongs to the cytochrome P450 family.</text>
</comment>
<sequence length="509" mass="58565">MIFELILISIVTYYFWHWTFWKRRGLPGPWGVPIFGKAGAMLEDSFPPGYTLQKWTKEYGKIYGFTEGMQKVMVISDPDLVQEILVKQYDNFYGRKHNPVQGDPDKDKDIHIVGAQGFRWKRLRTITAPAFSNGSIKKVLTTMEDSTQELMKKLREESENGKAVNMHLFYQEYTFDVISRVAMGQPDSQMFKNPLLKDVKGFFEHNRWQIWMFSGGFPFAVSFLKWLFIKVGKFGAGPFIVVQKSVTDAVMSRIAQREADKKHGVEPGEAADYIDMFLNARAEVEHFGESNDEFHKSSSYNNRQLTTQEIISQCFVFLVAGFDTTAISLSYVTYFLALNPKIQSKLQDEVDKECPNDEITFDQLSKLKYMDNVIKESLRLFPFASFANSRRCMRNTVIGEQIVEAGVDVMIDTWTLHHDKNVWGNDVEEFKPERWDSPLTPQQAYLSFGAGPRVCLGMRFALLEQKGLLSHILKKYTFETNAKTQLPIKLVGRATARPENLFLSLKPRV</sequence>
<keyword id="KW-0349">Heme</keyword>
<keyword id="KW-0408">Iron</keyword>
<keyword id="KW-0479">Metal-binding</keyword>
<keyword id="KW-0503">Monooxygenase</keyword>
<keyword id="KW-0560">Oxidoreductase</keyword>
<keyword id="KW-1185">Reference proteome</keyword>
<name>C13A8_CAEEL</name>